<comment type="subcellular location">
    <subcellularLocation>
        <location evidence="1">Cell membrane</location>
        <topology evidence="1">Lipid-anchor</topology>
    </subcellularLocation>
</comment>
<comment type="similarity">
    <text evidence="2">Belongs to the staphylococcal tandem lipoprotein family.</text>
</comment>
<feature type="signal peptide" evidence="1">
    <location>
        <begin position="1"/>
        <end position="22"/>
    </location>
</feature>
<feature type="chain" id="PRO_0000282155" description="Uncharacterized lipoprotein SAR0439">
    <location>
        <begin position="23"/>
        <end position="257"/>
    </location>
</feature>
<feature type="lipid moiety-binding region" description="N-palmitoyl cysteine" evidence="1">
    <location>
        <position position="23"/>
    </location>
</feature>
<feature type="lipid moiety-binding region" description="S-diacylglycerol cysteine" evidence="1">
    <location>
        <position position="23"/>
    </location>
</feature>
<accession>Q6GJN2</accession>
<sequence>MGYLKRFALYISVMILMFAIAGCGKGNETKEGSKETQIKKSFAKTLDMYPIKNLEDLYDKEGYRDGEFEKGDKGMWTIYTDFAKSNKPGELDDEGMVLNLDRNTRTAKGHYFVTTFYRNGKLPDEKNYKIEMKNNKIILLDEVKDDKLKQKIENFKFFGQYANLKELKKYNNGDVSINENVPSYDVEFKMSNKDENVKQLRSRYNISTEKSPILKMHIDGDLKGSSVGYRKLEIDFSKRENSKLSVIEFLSYKPAKK</sequence>
<keyword id="KW-1003">Cell membrane</keyword>
<keyword id="KW-0449">Lipoprotein</keyword>
<keyword id="KW-0472">Membrane</keyword>
<keyword id="KW-0564">Palmitate</keyword>
<keyword id="KW-0732">Signal</keyword>
<proteinExistence type="inferred from homology"/>
<dbReference type="EMBL" id="BX571856">
    <property type="protein sequence ID" value="CAG39460.1"/>
    <property type="molecule type" value="Genomic_DNA"/>
</dbReference>
<dbReference type="SMR" id="Q6GJN2"/>
<dbReference type="KEGG" id="sar:SAR0439"/>
<dbReference type="HOGENOM" id="CLU_071589_0_1_9"/>
<dbReference type="Proteomes" id="UP000000596">
    <property type="component" value="Chromosome"/>
</dbReference>
<dbReference type="GO" id="GO:0005886">
    <property type="term" value="C:plasma membrane"/>
    <property type="evidence" value="ECO:0007669"/>
    <property type="project" value="UniProtKB-SubCell"/>
</dbReference>
<dbReference type="Gene3D" id="2.50.20.40">
    <property type="match status" value="1"/>
</dbReference>
<dbReference type="InterPro" id="IPR007595">
    <property type="entry name" value="Csa"/>
</dbReference>
<dbReference type="InterPro" id="IPR038641">
    <property type="entry name" value="Csa_sf"/>
</dbReference>
<dbReference type="NCBIfam" id="TIGR01742">
    <property type="entry name" value="SA_tandem_lipo"/>
    <property type="match status" value="1"/>
</dbReference>
<dbReference type="Pfam" id="PF04507">
    <property type="entry name" value="DUF576"/>
    <property type="match status" value="1"/>
</dbReference>
<dbReference type="PROSITE" id="PS51257">
    <property type="entry name" value="PROKAR_LIPOPROTEIN"/>
    <property type="match status" value="1"/>
</dbReference>
<evidence type="ECO:0000255" key="1">
    <source>
        <dbReference type="PROSITE-ProRule" id="PRU00303"/>
    </source>
</evidence>
<evidence type="ECO:0000305" key="2"/>
<organism>
    <name type="scientific">Staphylococcus aureus (strain MRSA252)</name>
    <dbReference type="NCBI Taxonomy" id="282458"/>
    <lineage>
        <taxon>Bacteria</taxon>
        <taxon>Bacillati</taxon>
        <taxon>Bacillota</taxon>
        <taxon>Bacilli</taxon>
        <taxon>Bacillales</taxon>
        <taxon>Staphylococcaceae</taxon>
        <taxon>Staphylococcus</taxon>
    </lineage>
</organism>
<gene>
    <name type="ordered locus">SAR0439</name>
</gene>
<protein>
    <recommendedName>
        <fullName>Uncharacterized lipoprotein SAR0439</fullName>
    </recommendedName>
</protein>
<reference key="1">
    <citation type="journal article" date="2004" name="Proc. Natl. Acad. Sci. U.S.A.">
        <title>Complete genomes of two clinical Staphylococcus aureus strains: evidence for the rapid evolution of virulence and drug resistance.</title>
        <authorList>
            <person name="Holden M.T.G."/>
            <person name="Feil E.J."/>
            <person name="Lindsay J.A."/>
            <person name="Peacock S.J."/>
            <person name="Day N.P.J."/>
            <person name="Enright M.C."/>
            <person name="Foster T.J."/>
            <person name="Moore C.E."/>
            <person name="Hurst L."/>
            <person name="Atkin R."/>
            <person name="Barron A."/>
            <person name="Bason N."/>
            <person name="Bentley S.D."/>
            <person name="Chillingworth C."/>
            <person name="Chillingworth T."/>
            <person name="Churcher C."/>
            <person name="Clark L."/>
            <person name="Corton C."/>
            <person name="Cronin A."/>
            <person name="Doggett J."/>
            <person name="Dowd L."/>
            <person name="Feltwell T."/>
            <person name="Hance Z."/>
            <person name="Harris B."/>
            <person name="Hauser H."/>
            <person name="Holroyd S."/>
            <person name="Jagels K."/>
            <person name="James K.D."/>
            <person name="Lennard N."/>
            <person name="Line A."/>
            <person name="Mayes R."/>
            <person name="Moule S."/>
            <person name="Mungall K."/>
            <person name="Ormond D."/>
            <person name="Quail M.A."/>
            <person name="Rabbinowitsch E."/>
            <person name="Rutherford K.M."/>
            <person name="Sanders M."/>
            <person name="Sharp S."/>
            <person name="Simmonds M."/>
            <person name="Stevens K."/>
            <person name="Whitehead S."/>
            <person name="Barrell B.G."/>
            <person name="Spratt B.G."/>
            <person name="Parkhill J."/>
        </authorList>
    </citation>
    <scope>NUCLEOTIDE SEQUENCE [LARGE SCALE GENOMIC DNA]</scope>
    <source>
        <strain>MRSA252</strain>
    </source>
</reference>
<name>Y439_STAAR</name>